<comment type="function">
    <text evidence="4 6">May be involved in transcriptional regulation (Probable). In the central nervous system, may play a role in glial cell differentiation (PubMed:21131782).</text>
</comment>
<comment type="subcellular location">
    <subcellularLocation>
        <location evidence="6">Nucleus</location>
    </subcellularLocation>
</comment>
<comment type="developmental stage">
    <text evidence="4">Detected in embryonic forebrain at stages 12.5 dpc and 14.5 dpc where it is ubiquitously expressed.</text>
</comment>
<comment type="similarity">
    <text evidence="6">Belongs to the krueppel C2H2-type zinc-finger protein family.</text>
</comment>
<reference evidence="8" key="1">
    <citation type="journal article" date="2005" name="Science">
        <title>The transcriptional landscape of the mammalian genome.</title>
        <authorList>
            <person name="Carninci P."/>
            <person name="Kasukawa T."/>
            <person name="Katayama S."/>
            <person name="Gough J."/>
            <person name="Frith M.C."/>
            <person name="Maeda N."/>
            <person name="Oyama R."/>
            <person name="Ravasi T."/>
            <person name="Lenhard B."/>
            <person name="Wells C."/>
            <person name="Kodzius R."/>
            <person name="Shimokawa K."/>
            <person name="Bajic V.B."/>
            <person name="Brenner S.E."/>
            <person name="Batalov S."/>
            <person name="Forrest A.R."/>
            <person name="Zavolan M."/>
            <person name="Davis M.J."/>
            <person name="Wilming L.G."/>
            <person name="Aidinis V."/>
            <person name="Allen J.E."/>
            <person name="Ambesi-Impiombato A."/>
            <person name="Apweiler R."/>
            <person name="Aturaliya R.N."/>
            <person name="Bailey T.L."/>
            <person name="Bansal M."/>
            <person name="Baxter L."/>
            <person name="Beisel K.W."/>
            <person name="Bersano T."/>
            <person name="Bono H."/>
            <person name="Chalk A.M."/>
            <person name="Chiu K.P."/>
            <person name="Choudhary V."/>
            <person name="Christoffels A."/>
            <person name="Clutterbuck D.R."/>
            <person name="Crowe M.L."/>
            <person name="Dalla E."/>
            <person name="Dalrymple B.P."/>
            <person name="de Bono B."/>
            <person name="Della Gatta G."/>
            <person name="di Bernardo D."/>
            <person name="Down T."/>
            <person name="Engstrom P."/>
            <person name="Fagiolini M."/>
            <person name="Faulkner G."/>
            <person name="Fletcher C.F."/>
            <person name="Fukushima T."/>
            <person name="Furuno M."/>
            <person name="Futaki S."/>
            <person name="Gariboldi M."/>
            <person name="Georgii-Hemming P."/>
            <person name="Gingeras T.R."/>
            <person name="Gojobori T."/>
            <person name="Green R.E."/>
            <person name="Gustincich S."/>
            <person name="Harbers M."/>
            <person name="Hayashi Y."/>
            <person name="Hensch T.K."/>
            <person name="Hirokawa N."/>
            <person name="Hill D."/>
            <person name="Huminiecki L."/>
            <person name="Iacono M."/>
            <person name="Ikeo K."/>
            <person name="Iwama A."/>
            <person name="Ishikawa T."/>
            <person name="Jakt M."/>
            <person name="Kanapin A."/>
            <person name="Katoh M."/>
            <person name="Kawasawa Y."/>
            <person name="Kelso J."/>
            <person name="Kitamura H."/>
            <person name="Kitano H."/>
            <person name="Kollias G."/>
            <person name="Krishnan S.P."/>
            <person name="Kruger A."/>
            <person name="Kummerfeld S.K."/>
            <person name="Kurochkin I.V."/>
            <person name="Lareau L.F."/>
            <person name="Lazarevic D."/>
            <person name="Lipovich L."/>
            <person name="Liu J."/>
            <person name="Liuni S."/>
            <person name="McWilliam S."/>
            <person name="Madan Babu M."/>
            <person name="Madera M."/>
            <person name="Marchionni L."/>
            <person name="Matsuda H."/>
            <person name="Matsuzawa S."/>
            <person name="Miki H."/>
            <person name="Mignone F."/>
            <person name="Miyake S."/>
            <person name="Morris K."/>
            <person name="Mottagui-Tabar S."/>
            <person name="Mulder N."/>
            <person name="Nakano N."/>
            <person name="Nakauchi H."/>
            <person name="Ng P."/>
            <person name="Nilsson R."/>
            <person name="Nishiguchi S."/>
            <person name="Nishikawa S."/>
            <person name="Nori F."/>
            <person name="Ohara O."/>
            <person name="Okazaki Y."/>
            <person name="Orlando V."/>
            <person name="Pang K.C."/>
            <person name="Pavan W.J."/>
            <person name="Pavesi G."/>
            <person name="Pesole G."/>
            <person name="Petrovsky N."/>
            <person name="Piazza S."/>
            <person name="Reed J."/>
            <person name="Reid J.F."/>
            <person name="Ring B.Z."/>
            <person name="Ringwald M."/>
            <person name="Rost B."/>
            <person name="Ruan Y."/>
            <person name="Salzberg S.L."/>
            <person name="Sandelin A."/>
            <person name="Schneider C."/>
            <person name="Schoenbach C."/>
            <person name="Sekiguchi K."/>
            <person name="Semple C.A."/>
            <person name="Seno S."/>
            <person name="Sessa L."/>
            <person name="Sheng Y."/>
            <person name="Shibata Y."/>
            <person name="Shimada H."/>
            <person name="Shimada K."/>
            <person name="Silva D."/>
            <person name="Sinclair B."/>
            <person name="Sperling S."/>
            <person name="Stupka E."/>
            <person name="Sugiura K."/>
            <person name="Sultana R."/>
            <person name="Takenaka Y."/>
            <person name="Taki K."/>
            <person name="Tammoja K."/>
            <person name="Tan S.L."/>
            <person name="Tang S."/>
            <person name="Taylor M.S."/>
            <person name="Tegner J."/>
            <person name="Teichmann S.A."/>
            <person name="Ueda H.R."/>
            <person name="van Nimwegen E."/>
            <person name="Verardo R."/>
            <person name="Wei C.L."/>
            <person name="Yagi K."/>
            <person name="Yamanishi H."/>
            <person name="Zabarovsky E."/>
            <person name="Zhu S."/>
            <person name="Zimmer A."/>
            <person name="Hide W."/>
            <person name="Bult C."/>
            <person name="Grimmond S.M."/>
            <person name="Teasdale R.D."/>
            <person name="Liu E.T."/>
            <person name="Brusic V."/>
            <person name="Quackenbush J."/>
            <person name="Wahlestedt C."/>
            <person name="Mattick J.S."/>
            <person name="Hume D.A."/>
            <person name="Kai C."/>
            <person name="Sasaki D."/>
            <person name="Tomaru Y."/>
            <person name="Fukuda S."/>
            <person name="Kanamori-Katayama M."/>
            <person name="Suzuki M."/>
            <person name="Aoki J."/>
            <person name="Arakawa T."/>
            <person name="Iida J."/>
            <person name="Imamura K."/>
            <person name="Itoh M."/>
            <person name="Kato T."/>
            <person name="Kawaji H."/>
            <person name="Kawagashira N."/>
            <person name="Kawashima T."/>
            <person name="Kojima M."/>
            <person name="Kondo S."/>
            <person name="Konno H."/>
            <person name="Nakano K."/>
            <person name="Ninomiya N."/>
            <person name="Nishio T."/>
            <person name="Okada M."/>
            <person name="Plessy C."/>
            <person name="Shibata K."/>
            <person name="Shiraki T."/>
            <person name="Suzuki S."/>
            <person name="Tagami M."/>
            <person name="Waki K."/>
            <person name="Watahiki A."/>
            <person name="Okamura-Oho Y."/>
            <person name="Suzuki H."/>
            <person name="Kawai J."/>
            <person name="Hayashizaki Y."/>
        </authorList>
    </citation>
    <scope>NUCLEOTIDE SEQUENCE [LARGE SCALE MRNA]</scope>
    <source>
        <tissue evidence="8">Mammary gland</tissue>
    </source>
</reference>
<reference evidence="11" key="2">
    <citation type="journal article" date="2009" name="PLoS Biol.">
        <title>Lineage-specific biology revealed by a finished genome assembly of the mouse.</title>
        <authorList>
            <person name="Church D.M."/>
            <person name="Goodstadt L."/>
            <person name="Hillier L.W."/>
            <person name="Zody M.C."/>
            <person name="Goldstein S."/>
            <person name="She X."/>
            <person name="Bult C.J."/>
            <person name="Agarwala R."/>
            <person name="Cherry J.L."/>
            <person name="DiCuccio M."/>
            <person name="Hlavina W."/>
            <person name="Kapustin Y."/>
            <person name="Meric P."/>
            <person name="Maglott D."/>
            <person name="Birtle Z."/>
            <person name="Marques A.C."/>
            <person name="Graves T."/>
            <person name="Zhou S."/>
            <person name="Teague B."/>
            <person name="Potamousis K."/>
            <person name="Churas C."/>
            <person name="Place M."/>
            <person name="Herschleb J."/>
            <person name="Runnheim R."/>
            <person name="Forrest D."/>
            <person name="Amos-Landgraf J."/>
            <person name="Schwartz D.C."/>
            <person name="Cheng Z."/>
            <person name="Lindblad-Toh K."/>
            <person name="Eichler E.E."/>
            <person name="Ponting C.P."/>
        </authorList>
    </citation>
    <scope>NUCLEOTIDE SEQUENCE [LARGE SCALE GENOMIC DNA]</scope>
    <source>
        <strain evidence="11">C57BL/6J</strain>
    </source>
</reference>
<reference evidence="9" key="3">
    <citation type="submission" date="2005-09" db="EMBL/GenBank/DDBJ databases">
        <authorList>
            <person name="Mural R.J."/>
            <person name="Adams M.D."/>
            <person name="Myers E.W."/>
            <person name="Smith H.O."/>
            <person name="Venter J.C."/>
        </authorList>
    </citation>
    <scope>NUCLEOTIDE SEQUENCE [LARGE SCALE GENOMIC DNA]</scope>
</reference>
<reference evidence="7" key="4">
    <citation type="journal article" date="2004" name="Genome Res.">
        <title>The status, quality, and expansion of the NIH full-length cDNA project: the Mammalian Gene Collection (MGC).</title>
        <authorList>
            <consortium name="The MGC Project Team"/>
        </authorList>
    </citation>
    <scope>NUCLEOTIDE SEQUENCE [LARGE SCALE MRNA]</scope>
    <source>
        <strain evidence="7">C57BL/6J</strain>
        <tissue evidence="7">Brain</tissue>
    </source>
</reference>
<reference evidence="6" key="5">
    <citation type="journal article" date="2010" name="Cell Cycle">
        <title>The novel BTB/POZ and zinc finger factor Zbtb45 is essential for proper glial differentiation of neural and oligodendrocyte progenitor cells.</title>
        <authorList>
            <person name="Soedersten E."/>
            <person name="Lilja T."/>
            <person name="Hermanson O."/>
        </authorList>
    </citation>
    <scope>FUNCTION</scope>
    <scope>DEVELOPMENTAL STAGE</scope>
</reference>
<keyword id="KW-0238">DNA-binding</keyword>
<keyword id="KW-0479">Metal-binding</keyword>
<keyword id="KW-0524">Neurogenesis</keyword>
<keyword id="KW-0539">Nucleus</keyword>
<keyword id="KW-1185">Reference proteome</keyword>
<keyword id="KW-0677">Repeat</keyword>
<keyword id="KW-0804">Transcription</keyword>
<keyword id="KW-0805">Transcription regulation</keyword>
<keyword id="KW-0862">Zinc</keyword>
<keyword id="KW-0863">Zinc-finger</keyword>
<protein>
    <recommendedName>
        <fullName evidence="5">Zinc finger and BTB domain-containing protein 45</fullName>
    </recommendedName>
    <alternativeName>
        <fullName evidence="6">Zinc finger protein 499</fullName>
    </alternativeName>
</protein>
<proteinExistence type="evidence at transcript level"/>
<name>ZBT45_MOUSE</name>
<evidence type="ECO:0000255" key="1">
    <source>
        <dbReference type="PROSITE-ProRule" id="PRU00037"/>
    </source>
</evidence>
<evidence type="ECO:0000255" key="2">
    <source>
        <dbReference type="PROSITE-ProRule" id="PRU00042"/>
    </source>
</evidence>
<evidence type="ECO:0000256" key="3">
    <source>
        <dbReference type="SAM" id="MobiDB-lite"/>
    </source>
</evidence>
<evidence type="ECO:0000269" key="4">
    <source>
    </source>
</evidence>
<evidence type="ECO:0000303" key="5">
    <source>
    </source>
</evidence>
<evidence type="ECO:0000305" key="6"/>
<evidence type="ECO:0000312" key="7">
    <source>
        <dbReference type="EMBL" id="AAH94359.1"/>
    </source>
</evidence>
<evidence type="ECO:0000312" key="8">
    <source>
        <dbReference type="EMBL" id="BAE38743.1"/>
    </source>
</evidence>
<evidence type="ECO:0000312" key="9">
    <source>
        <dbReference type="EMBL" id="EDL38083.1"/>
    </source>
</evidence>
<evidence type="ECO:0000312" key="10">
    <source>
        <dbReference type="MGI" id="MGI:2685003"/>
    </source>
</evidence>
<evidence type="ECO:0000312" key="11">
    <source>
        <dbReference type="Proteomes" id="UP000000589"/>
    </source>
</evidence>
<sequence length="520" mass="55012">MAATEAVHHIHLQNFSRSLLETLNGQRLGGHFCDVTVRIREASLRAHRCVLAAGSPFFQDKLLLGHSEIRVPPVVPAQTVRQLVEFLYSGSLVVAQGEALQVLTAASVLRIQTVIDECTQIIARARVPNTPAPAPLPPPVPPPLAPAQLRHRLRHLLAARPPGHPNAAHSRKQRQPARLQLPAPPAPIKAEGPDAEPALTAAPEDRGEEDDDEETDEETDAEEGEGGGGGPGEGQAPPAFPDCAGGFLTTAADSAREDPPASTGITDYGGAGRDFLRGTGVTEDVFPDSYVSAWHEESSGGPESCPVETSAPPDCALAGPRPTGVKTPGPPVALFPFHLGAPGPPAPTPPTPSGPAPAPPPTFYPTLQPDAAPSAQLGETQAVPAAPAAQATAISGTPVRAPGGQGAEQPAYECSHCRKTFSSRKNYTKHMFIHSGEKPHQCAVCWRSFSLRDYLLKHMVTHTGVRAFQCAVCAKRFTQKSSLNVHMRTHRPERAPCPACGKVFSHRALLERHLAAHPAP</sequence>
<accession>Q52KG4</accession>
<accession>Q3TLP9</accession>
<gene>
    <name evidence="5 10" type="primary">Zbtb45</name>
    <name evidence="10" type="synonym">Gm157</name>
    <name evidence="10" type="synonym">Zfp499</name>
</gene>
<dbReference type="EMBL" id="AK166382">
    <property type="protein sequence ID" value="BAE38743.1"/>
    <property type="molecule type" value="mRNA"/>
</dbReference>
<dbReference type="EMBL" id="AC121301">
    <property type="status" value="NOT_ANNOTATED_CDS"/>
    <property type="molecule type" value="Genomic_DNA"/>
</dbReference>
<dbReference type="EMBL" id="CH466634">
    <property type="protein sequence ID" value="EDL38083.1"/>
    <property type="molecule type" value="Genomic_DNA"/>
</dbReference>
<dbReference type="EMBL" id="CH466634">
    <property type="protein sequence ID" value="EDL38084.1"/>
    <property type="molecule type" value="Genomic_DNA"/>
</dbReference>
<dbReference type="EMBL" id="BC094359">
    <property type="protein sequence ID" value="AAH94359.1"/>
    <property type="molecule type" value="mRNA"/>
</dbReference>
<dbReference type="CCDS" id="CCDS20822.1"/>
<dbReference type="RefSeq" id="NP_001019870.1">
    <property type="nucleotide sequence ID" value="NM_001024699.2"/>
</dbReference>
<dbReference type="RefSeq" id="NP_001347762.1">
    <property type="nucleotide sequence ID" value="NM_001360833.1"/>
</dbReference>
<dbReference type="RefSeq" id="XP_006539865.1">
    <property type="nucleotide sequence ID" value="XM_006539802.1"/>
</dbReference>
<dbReference type="RefSeq" id="XP_006539866.1">
    <property type="nucleotide sequence ID" value="XM_006539803.3"/>
</dbReference>
<dbReference type="RefSeq" id="XP_006539867.1">
    <property type="nucleotide sequence ID" value="XM_006539804.4"/>
</dbReference>
<dbReference type="SMR" id="Q52KG4"/>
<dbReference type="FunCoup" id="Q52KG4">
    <property type="interactions" value="419"/>
</dbReference>
<dbReference type="STRING" id="10090.ENSMUSP00000147298"/>
<dbReference type="GlyGen" id="Q52KG4">
    <property type="glycosylation" value="2 sites"/>
</dbReference>
<dbReference type="iPTMnet" id="Q52KG4"/>
<dbReference type="PhosphoSitePlus" id="Q52KG4"/>
<dbReference type="PaxDb" id="10090-ENSMUSP00000130439"/>
<dbReference type="ProteomicsDB" id="298497"/>
<dbReference type="Pumba" id="Q52KG4"/>
<dbReference type="Antibodypedia" id="19698">
    <property type="antibodies" value="78 antibodies from 19 providers"/>
</dbReference>
<dbReference type="Ensembl" id="ENSMUST00000051390.9">
    <property type="protein sequence ID" value="ENSMUSP00000056086.8"/>
    <property type="gene ID" value="ENSMUSG00000049600.10"/>
</dbReference>
<dbReference type="Ensembl" id="ENSMUST00000210282.2">
    <property type="protein sequence ID" value="ENSMUSP00000147298.2"/>
    <property type="gene ID" value="ENSMUSG00000049600.10"/>
</dbReference>
<dbReference type="GeneID" id="232879"/>
<dbReference type="KEGG" id="mmu:232879"/>
<dbReference type="UCSC" id="uc009fez.1">
    <property type="organism name" value="mouse"/>
</dbReference>
<dbReference type="AGR" id="MGI:2685003"/>
<dbReference type="CTD" id="84878"/>
<dbReference type="MGI" id="MGI:2685003">
    <property type="gene designation" value="Zbtb45"/>
</dbReference>
<dbReference type="VEuPathDB" id="HostDB:ENSMUSG00000049600"/>
<dbReference type="eggNOG" id="KOG1721">
    <property type="taxonomic scope" value="Eukaryota"/>
</dbReference>
<dbReference type="GeneTree" id="ENSGT00940000160859"/>
<dbReference type="HOGENOM" id="CLU_019055_1_0_1"/>
<dbReference type="InParanoid" id="Q52KG4"/>
<dbReference type="OMA" id="MVAWKGD"/>
<dbReference type="OrthoDB" id="10261408at2759"/>
<dbReference type="PhylomeDB" id="Q52KG4"/>
<dbReference type="TreeFam" id="TF335684"/>
<dbReference type="BioGRID-ORCS" id="232879">
    <property type="hits" value="1 hit in 77 CRISPR screens"/>
</dbReference>
<dbReference type="PRO" id="PR:Q52KG4"/>
<dbReference type="Proteomes" id="UP000000589">
    <property type="component" value="Chromosome 7"/>
</dbReference>
<dbReference type="RNAct" id="Q52KG4">
    <property type="molecule type" value="protein"/>
</dbReference>
<dbReference type="Bgee" id="ENSMUSG00000049600">
    <property type="expression patterns" value="Expressed in embryonic brain and 209 other cell types or tissues"/>
</dbReference>
<dbReference type="ExpressionAtlas" id="Q52KG4">
    <property type="expression patterns" value="baseline and differential"/>
</dbReference>
<dbReference type="GO" id="GO:0005634">
    <property type="term" value="C:nucleus"/>
    <property type="evidence" value="ECO:0007669"/>
    <property type="project" value="UniProtKB-SubCell"/>
</dbReference>
<dbReference type="GO" id="GO:1990837">
    <property type="term" value="F:sequence-specific double-stranded DNA binding"/>
    <property type="evidence" value="ECO:0007669"/>
    <property type="project" value="Ensembl"/>
</dbReference>
<dbReference type="GO" id="GO:0008270">
    <property type="term" value="F:zinc ion binding"/>
    <property type="evidence" value="ECO:0007669"/>
    <property type="project" value="UniProtKB-KW"/>
</dbReference>
<dbReference type="GO" id="GO:0007399">
    <property type="term" value="P:nervous system development"/>
    <property type="evidence" value="ECO:0007669"/>
    <property type="project" value="UniProtKB-KW"/>
</dbReference>
<dbReference type="CDD" id="cd18229">
    <property type="entry name" value="BTB_POZ_ZBTB45"/>
    <property type="match status" value="1"/>
</dbReference>
<dbReference type="FunFam" id="3.30.160.60:FF:000304">
    <property type="entry name" value="Zinc finger and BTB domain-containing protein 20"/>
    <property type="match status" value="1"/>
</dbReference>
<dbReference type="FunFam" id="3.30.160.60:FF:000315">
    <property type="entry name" value="Zinc finger and BTB domain-containing protein 20"/>
    <property type="match status" value="1"/>
</dbReference>
<dbReference type="Gene3D" id="3.30.160.60">
    <property type="entry name" value="Classic Zinc Finger"/>
    <property type="match status" value="3"/>
</dbReference>
<dbReference type="Gene3D" id="3.30.710.10">
    <property type="entry name" value="Potassium Channel Kv1.1, Chain A"/>
    <property type="match status" value="1"/>
</dbReference>
<dbReference type="InterPro" id="IPR000210">
    <property type="entry name" value="BTB/POZ_dom"/>
</dbReference>
<dbReference type="InterPro" id="IPR011333">
    <property type="entry name" value="SKP1/BTB/POZ_sf"/>
</dbReference>
<dbReference type="InterPro" id="IPR036236">
    <property type="entry name" value="Znf_C2H2_sf"/>
</dbReference>
<dbReference type="InterPro" id="IPR013087">
    <property type="entry name" value="Znf_C2H2_type"/>
</dbReference>
<dbReference type="InterPro" id="IPR050457">
    <property type="entry name" value="ZnFinger_BTB_dom_contain"/>
</dbReference>
<dbReference type="PANTHER" id="PTHR46105">
    <property type="entry name" value="AGAP004733-PA"/>
    <property type="match status" value="1"/>
</dbReference>
<dbReference type="PANTHER" id="PTHR46105:SF22">
    <property type="entry name" value="ZINC FINGER AND BTB DOMAIN CONTAINING 45"/>
    <property type="match status" value="1"/>
</dbReference>
<dbReference type="Pfam" id="PF00651">
    <property type="entry name" value="BTB"/>
    <property type="match status" value="1"/>
</dbReference>
<dbReference type="Pfam" id="PF00096">
    <property type="entry name" value="zf-C2H2"/>
    <property type="match status" value="4"/>
</dbReference>
<dbReference type="SMART" id="SM00225">
    <property type="entry name" value="BTB"/>
    <property type="match status" value="1"/>
</dbReference>
<dbReference type="SMART" id="SM00355">
    <property type="entry name" value="ZnF_C2H2"/>
    <property type="match status" value="4"/>
</dbReference>
<dbReference type="SUPFAM" id="SSF57667">
    <property type="entry name" value="beta-beta-alpha zinc fingers"/>
    <property type="match status" value="2"/>
</dbReference>
<dbReference type="SUPFAM" id="SSF54695">
    <property type="entry name" value="POZ domain"/>
    <property type="match status" value="1"/>
</dbReference>
<dbReference type="PROSITE" id="PS50097">
    <property type="entry name" value="BTB"/>
    <property type="match status" value="1"/>
</dbReference>
<dbReference type="PROSITE" id="PS00028">
    <property type="entry name" value="ZINC_FINGER_C2H2_1"/>
    <property type="match status" value="4"/>
</dbReference>
<dbReference type="PROSITE" id="PS50157">
    <property type="entry name" value="ZINC_FINGER_C2H2_2"/>
    <property type="match status" value="4"/>
</dbReference>
<organism evidence="7">
    <name type="scientific">Mus musculus</name>
    <name type="common">Mouse</name>
    <dbReference type="NCBI Taxonomy" id="10090"/>
    <lineage>
        <taxon>Eukaryota</taxon>
        <taxon>Metazoa</taxon>
        <taxon>Chordata</taxon>
        <taxon>Craniata</taxon>
        <taxon>Vertebrata</taxon>
        <taxon>Euteleostomi</taxon>
        <taxon>Mammalia</taxon>
        <taxon>Eutheria</taxon>
        <taxon>Euarchontoglires</taxon>
        <taxon>Glires</taxon>
        <taxon>Rodentia</taxon>
        <taxon>Myomorpha</taxon>
        <taxon>Muroidea</taxon>
        <taxon>Muridae</taxon>
        <taxon>Murinae</taxon>
        <taxon>Mus</taxon>
        <taxon>Mus</taxon>
    </lineage>
</organism>
<feature type="chain" id="PRO_0000439879" description="Zinc finger and BTB domain-containing protein 45">
    <location>
        <begin position="1"/>
        <end position="520"/>
    </location>
</feature>
<feature type="domain" description="BTB" evidence="1">
    <location>
        <begin position="33"/>
        <end position="96"/>
    </location>
</feature>
<feature type="zinc finger region" description="C2H2-type 1" evidence="2">
    <location>
        <begin position="412"/>
        <end position="434"/>
    </location>
</feature>
<feature type="zinc finger region" description="C2H2-type 2" evidence="2">
    <location>
        <begin position="440"/>
        <end position="462"/>
    </location>
</feature>
<feature type="zinc finger region" description="C2H2-type 3" evidence="2">
    <location>
        <begin position="468"/>
        <end position="490"/>
    </location>
</feature>
<feature type="zinc finger region" description="C2H2-type 4" evidence="2">
    <location>
        <begin position="495"/>
        <end position="517"/>
    </location>
</feature>
<feature type="region of interest" description="Disordered" evidence="3">
    <location>
        <begin position="182"/>
        <end position="272"/>
    </location>
</feature>
<feature type="region of interest" description="Disordered" evidence="3">
    <location>
        <begin position="337"/>
        <end position="372"/>
    </location>
</feature>
<feature type="compositionally biased region" description="Acidic residues" evidence="3">
    <location>
        <begin position="206"/>
        <end position="225"/>
    </location>
</feature>
<feature type="compositionally biased region" description="Pro residues" evidence="3">
    <location>
        <begin position="342"/>
        <end position="363"/>
    </location>
</feature>
<feature type="sequence conflict" description="In Ref. 1; BAE38743." evidence="6" ref="1">
    <original>S</original>
    <variation>G</variation>
    <location>
        <position position="304"/>
    </location>
</feature>